<comment type="function">
    <text evidence="1">Could be involved in insertion of integral membrane proteins into the membrane.</text>
</comment>
<comment type="subcellular location">
    <subcellularLocation>
        <location evidence="1">Cell inner membrane</location>
        <topology evidence="1">Peripheral membrane protein</topology>
        <orientation evidence="1">Cytoplasmic side</orientation>
    </subcellularLocation>
</comment>
<comment type="similarity">
    <text evidence="1">Belongs to the UPF0161 family.</text>
</comment>
<organism>
    <name type="scientific">Histophilus somni (strain 129Pt)</name>
    <name type="common">Haemophilus somnus</name>
    <dbReference type="NCBI Taxonomy" id="205914"/>
    <lineage>
        <taxon>Bacteria</taxon>
        <taxon>Pseudomonadati</taxon>
        <taxon>Pseudomonadota</taxon>
        <taxon>Gammaproteobacteria</taxon>
        <taxon>Pasteurellales</taxon>
        <taxon>Pasteurellaceae</taxon>
        <taxon>Histophilus</taxon>
    </lineage>
</organism>
<evidence type="ECO:0000255" key="1">
    <source>
        <dbReference type="HAMAP-Rule" id="MF_00386"/>
    </source>
</evidence>
<name>YIDD_HISS1</name>
<sequence length="86" mass="9526">METSHSFGAKVLIGAIRIYQLMISPLIGPRCRFVPTCSCYGIQAVKTHGVVKGSWLTVKRILKCHPFNVGGYDPVPPKINNNKENE</sequence>
<feature type="chain" id="PRO_1000013092" description="Putative membrane protein insertion efficiency factor">
    <location>
        <begin position="1"/>
        <end position="86"/>
    </location>
</feature>
<dbReference type="EMBL" id="CP000436">
    <property type="protein sequence ID" value="ABI24412.1"/>
    <property type="molecule type" value="Genomic_DNA"/>
</dbReference>
<dbReference type="KEGG" id="hso:HS_0134"/>
<dbReference type="eggNOG" id="COG0759">
    <property type="taxonomic scope" value="Bacteria"/>
</dbReference>
<dbReference type="HOGENOM" id="CLU_144811_6_0_6"/>
<dbReference type="GO" id="GO:0005886">
    <property type="term" value="C:plasma membrane"/>
    <property type="evidence" value="ECO:0007669"/>
    <property type="project" value="UniProtKB-SubCell"/>
</dbReference>
<dbReference type="HAMAP" id="MF_00386">
    <property type="entry name" value="UPF0161_YidD"/>
    <property type="match status" value="1"/>
</dbReference>
<dbReference type="InterPro" id="IPR002696">
    <property type="entry name" value="Membr_insert_effic_factor_YidD"/>
</dbReference>
<dbReference type="NCBIfam" id="TIGR00278">
    <property type="entry name" value="membrane protein insertion efficiency factor YidD"/>
    <property type="match status" value="1"/>
</dbReference>
<dbReference type="PANTHER" id="PTHR33383">
    <property type="entry name" value="MEMBRANE PROTEIN INSERTION EFFICIENCY FACTOR-RELATED"/>
    <property type="match status" value="1"/>
</dbReference>
<dbReference type="PANTHER" id="PTHR33383:SF1">
    <property type="entry name" value="MEMBRANE PROTEIN INSERTION EFFICIENCY FACTOR-RELATED"/>
    <property type="match status" value="1"/>
</dbReference>
<dbReference type="Pfam" id="PF01809">
    <property type="entry name" value="YidD"/>
    <property type="match status" value="1"/>
</dbReference>
<dbReference type="SMART" id="SM01234">
    <property type="entry name" value="Haemolytic"/>
    <property type="match status" value="1"/>
</dbReference>
<keyword id="KW-0997">Cell inner membrane</keyword>
<keyword id="KW-1003">Cell membrane</keyword>
<keyword id="KW-0472">Membrane</keyword>
<protein>
    <recommendedName>
        <fullName evidence="1">Putative membrane protein insertion efficiency factor</fullName>
    </recommendedName>
</protein>
<accession>Q0I0Z0</accession>
<gene>
    <name type="ordered locus">HS_0134</name>
</gene>
<reference key="1">
    <citation type="journal article" date="2007" name="J. Bacteriol.">
        <title>Complete genome sequence of Haemophilus somnus (Histophilus somni) strain 129Pt and comparison to Haemophilus ducreyi 35000HP and Haemophilus influenzae Rd.</title>
        <authorList>
            <person name="Challacombe J.F."/>
            <person name="Duncan A.J."/>
            <person name="Brettin T.S."/>
            <person name="Bruce D."/>
            <person name="Chertkov O."/>
            <person name="Detter J.C."/>
            <person name="Han C.S."/>
            <person name="Misra M."/>
            <person name="Richardson P."/>
            <person name="Tapia R."/>
            <person name="Thayer N."/>
            <person name="Xie G."/>
            <person name="Inzana T.J."/>
        </authorList>
    </citation>
    <scope>NUCLEOTIDE SEQUENCE [LARGE SCALE GENOMIC DNA]</scope>
    <source>
        <strain>129Pt</strain>
    </source>
</reference>
<proteinExistence type="inferred from homology"/>